<name>RL13_RUBXD</name>
<accession>Q1AU63</accession>
<gene>
    <name evidence="1" type="primary">rplM</name>
    <name type="ordered locus">Rxyl_2121</name>
</gene>
<reference key="1">
    <citation type="submission" date="2006-06" db="EMBL/GenBank/DDBJ databases">
        <title>Complete sequence of Rubrobacter xylanophilus DSM 9941.</title>
        <authorList>
            <consortium name="US DOE Joint Genome Institute"/>
            <person name="Copeland A."/>
            <person name="Lucas S."/>
            <person name="Lapidus A."/>
            <person name="Barry K."/>
            <person name="Detter J.C."/>
            <person name="Glavina del Rio T."/>
            <person name="Hammon N."/>
            <person name="Israni S."/>
            <person name="Dalin E."/>
            <person name="Tice H."/>
            <person name="Pitluck S."/>
            <person name="Munk A.C."/>
            <person name="Brettin T."/>
            <person name="Bruce D."/>
            <person name="Han C."/>
            <person name="Tapia R."/>
            <person name="Gilna P."/>
            <person name="Schmutz J."/>
            <person name="Larimer F."/>
            <person name="Land M."/>
            <person name="Hauser L."/>
            <person name="Kyrpides N."/>
            <person name="Lykidis A."/>
            <person name="da Costa M.S."/>
            <person name="Rainey F.A."/>
            <person name="Empadinhas N."/>
            <person name="Jolivet E."/>
            <person name="Battista J.R."/>
            <person name="Richardson P."/>
        </authorList>
    </citation>
    <scope>NUCLEOTIDE SEQUENCE [LARGE SCALE GENOMIC DNA]</scope>
    <source>
        <strain>DSM 9941 / JCM 11954 / NBRC 16129 / PRD-1</strain>
    </source>
</reference>
<evidence type="ECO:0000255" key="1">
    <source>
        <dbReference type="HAMAP-Rule" id="MF_01366"/>
    </source>
</evidence>
<evidence type="ECO:0000305" key="2"/>
<protein>
    <recommendedName>
        <fullName evidence="1">Large ribosomal subunit protein uL13</fullName>
    </recommendedName>
    <alternativeName>
        <fullName evidence="2">50S ribosomal protein L13</fullName>
    </alternativeName>
</protein>
<sequence length="143" mass="16667">MKSYMARPGEVERKWYVIDAEGKTLGRLAAEISRLLRGKNKPQYTPHVDVGDFVVVVNADKVEVTGRKAEQKVYRWHTGYPGGLRERSYRQMLRKRPEEILRQAVRGMMPKTRLARRQLKKLRIYAGPEHPHAGQTPEPYEVR</sequence>
<proteinExistence type="inferred from homology"/>
<feature type="chain" id="PRO_0000261788" description="Large ribosomal subunit protein uL13">
    <location>
        <begin position="1"/>
        <end position="143"/>
    </location>
</feature>
<dbReference type="EMBL" id="CP000386">
    <property type="protein sequence ID" value="ABG05065.1"/>
    <property type="status" value="ALT_INIT"/>
    <property type="molecule type" value="Genomic_DNA"/>
</dbReference>
<dbReference type="RefSeq" id="WP_041328259.1">
    <property type="nucleotide sequence ID" value="NC_008148.1"/>
</dbReference>
<dbReference type="SMR" id="Q1AU63"/>
<dbReference type="STRING" id="266117.Rxyl_2121"/>
<dbReference type="KEGG" id="rxy:Rxyl_2121"/>
<dbReference type="eggNOG" id="COG0102">
    <property type="taxonomic scope" value="Bacteria"/>
</dbReference>
<dbReference type="HOGENOM" id="CLU_082184_2_2_11"/>
<dbReference type="OrthoDB" id="9801330at2"/>
<dbReference type="PhylomeDB" id="Q1AU63"/>
<dbReference type="Proteomes" id="UP000006637">
    <property type="component" value="Chromosome"/>
</dbReference>
<dbReference type="GO" id="GO:0022625">
    <property type="term" value="C:cytosolic large ribosomal subunit"/>
    <property type="evidence" value="ECO:0007669"/>
    <property type="project" value="TreeGrafter"/>
</dbReference>
<dbReference type="GO" id="GO:0003729">
    <property type="term" value="F:mRNA binding"/>
    <property type="evidence" value="ECO:0007669"/>
    <property type="project" value="TreeGrafter"/>
</dbReference>
<dbReference type="GO" id="GO:0003735">
    <property type="term" value="F:structural constituent of ribosome"/>
    <property type="evidence" value="ECO:0007669"/>
    <property type="project" value="InterPro"/>
</dbReference>
<dbReference type="GO" id="GO:0017148">
    <property type="term" value="P:negative regulation of translation"/>
    <property type="evidence" value="ECO:0007669"/>
    <property type="project" value="TreeGrafter"/>
</dbReference>
<dbReference type="GO" id="GO:0006412">
    <property type="term" value="P:translation"/>
    <property type="evidence" value="ECO:0007669"/>
    <property type="project" value="UniProtKB-UniRule"/>
</dbReference>
<dbReference type="CDD" id="cd00392">
    <property type="entry name" value="Ribosomal_L13"/>
    <property type="match status" value="1"/>
</dbReference>
<dbReference type="FunFam" id="3.90.1180.10:FF:000001">
    <property type="entry name" value="50S ribosomal protein L13"/>
    <property type="match status" value="1"/>
</dbReference>
<dbReference type="Gene3D" id="3.90.1180.10">
    <property type="entry name" value="Ribosomal protein L13"/>
    <property type="match status" value="1"/>
</dbReference>
<dbReference type="HAMAP" id="MF_01366">
    <property type="entry name" value="Ribosomal_uL13"/>
    <property type="match status" value="1"/>
</dbReference>
<dbReference type="InterPro" id="IPR005822">
    <property type="entry name" value="Ribosomal_uL13"/>
</dbReference>
<dbReference type="InterPro" id="IPR005823">
    <property type="entry name" value="Ribosomal_uL13_bac-type"/>
</dbReference>
<dbReference type="InterPro" id="IPR036899">
    <property type="entry name" value="Ribosomal_uL13_sf"/>
</dbReference>
<dbReference type="NCBIfam" id="TIGR01066">
    <property type="entry name" value="rplM_bact"/>
    <property type="match status" value="1"/>
</dbReference>
<dbReference type="PANTHER" id="PTHR11545:SF2">
    <property type="entry name" value="LARGE RIBOSOMAL SUBUNIT PROTEIN UL13M"/>
    <property type="match status" value="1"/>
</dbReference>
<dbReference type="PANTHER" id="PTHR11545">
    <property type="entry name" value="RIBOSOMAL PROTEIN L13"/>
    <property type="match status" value="1"/>
</dbReference>
<dbReference type="Pfam" id="PF00572">
    <property type="entry name" value="Ribosomal_L13"/>
    <property type="match status" value="1"/>
</dbReference>
<dbReference type="PIRSF" id="PIRSF002181">
    <property type="entry name" value="Ribosomal_L13"/>
    <property type="match status" value="1"/>
</dbReference>
<dbReference type="SUPFAM" id="SSF52161">
    <property type="entry name" value="Ribosomal protein L13"/>
    <property type="match status" value="1"/>
</dbReference>
<organism>
    <name type="scientific">Rubrobacter xylanophilus (strain DSM 9941 / JCM 11954 / NBRC 16129 / PRD-1)</name>
    <dbReference type="NCBI Taxonomy" id="266117"/>
    <lineage>
        <taxon>Bacteria</taxon>
        <taxon>Bacillati</taxon>
        <taxon>Actinomycetota</taxon>
        <taxon>Rubrobacteria</taxon>
        <taxon>Rubrobacterales</taxon>
        <taxon>Rubrobacteraceae</taxon>
        <taxon>Rubrobacter</taxon>
    </lineage>
</organism>
<keyword id="KW-1185">Reference proteome</keyword>
<keyword id="KW-0687">Ribonucleoprotein</keyword>
<keyword id="KW-0689">Ribosomal protein</keyword>
<comment type="function">
    <text evidence="1">This protein is one of the early assembly proteins of the 50S ribosomal subunit, although it is not seen to bind rRNA by itself. It is important during the early stages of 50S assembly.</text>
</comment>
<comment type="subunit">
    <text evidence="1">Part of the 50S ribosomal subunit.</text>
</comment>
<comment type="similarity">
    <text evidence="1">Belongs to the universal ribosomal protein uL13 family.</text>
</comment>
<comment type="sequence caution" evidence="2">
    <conflict type="erroneous initiation">
        <sequence resource="EMBL-CDS" id="ABG05065"/>
    </conflict>
</comment>